<dbReference type="EC" id="6.3.2.1" evidence="1"/>
<dbReference type="EMBL" id="AP007255">
    <property type="protein sequence ID" value="BAE53175.1"/>
    <property type="molecule type" value="Genomic_DNA"/>
</dbReference>
<dbReference type="RefSeq" id="WP_011386718.1">
    <property type="nucleotide sequence ID" value="NC_007626.1"/>
</dbReference>
<dbReference type="SMR" id="Q2VZ00"/>
<dbReference type="STRING" id="342108.amb4371"/>
<dbReference type="KEGG" id="mag:amb4371"/>
<dbReference type="HOGENOM" id="CLU_047148_0_0_5"/>
<dbReference type="OrthoDB" id="9773087at2"/>
<dbReference type="UniPathway" id="UPA00028">
    <property type="reaction ID" value="UER00005"/>
</dbReference>
<dbReference type="Proteomes" id="UP000007058">
    <property type="component" value="Chromosome"/>
</dbReference>
<dbReference type="GO" id="GO:0005829">
    <property type="term" value="C:cytosol"/>
    <property type="evidence" value="ECO:0007669"/>
    <property type="project" value="TreeGrafter"/>
</dbReference>
<dbReference type="GO" id="GO:0005524">
    <property type="term" value="F:ATP binding"/>
    <property type="evidence" value="ECO:0007669"/>
    <property type="project" value="UniProtKB-KW"/>
</dbReference>
<dbReference type="GO" id="GO:0004592">
    <property type="term" value="F:pantoate-beta-alanine ligase activity"/>
    <property type="evidence" value="ECO:0007669"/>
    <property type="project" value="UniProtKB-UniRule"/>
</dbReference>
<dbReference type="GO" id="GO:0015940">
    <property type="term" value="P:pantothenate biosynthetic process"/>
    <property type="evidence" value="ECO:0007669"/>
    <property type="project" value="UniProtKB-UniRule"/>
</dbReference>
<dbReference type="CDD" id="cd00560">
    <property type="entry name" value="PanC"/>
    <property type="match status" value="1"/>
</dbReference>
<dbReference type="Gene3D" id="3.40.50.620">
    <property type="entry name" value="HUPs"/>
    <property type="match status" value="1"/>
</dbReference>
<dbReference type="Gene3D" id="3.30.1300.10">
    <property type="entry name" value="Pantoate-beta-alanine ligase, C-terminal domain"/>
    <property type="match status" value="1"/>
</dbReference>
<dbReference type="HAMAP" id="MF_00158">
    <property type="entry name" value="PanC"/>
    <property type="match status" value="1"/>
</dbReference>
<dbReference type="InterPro" id="IPR004821">
    <property type="entry name" value="Cyt_trans-like"/>
</dbReference>
<dbReference type="InterPro" id="IPR003721">
    <property type="entry name" value="Pantoate_ligase"/>
</dbReference>
<dbReference type="InterPro" id="IPR042176">
    <property type="entry name" value="Pantoate_ligase_C"/>
</dbReference>
<dbReference type="InterPro" id="IPR014729">
    <property type="entry name" value="Rossmann-like_a/b/a_fold"/>
</dbReference>
<dbReference type="NCBIfam" id="TIGR00125">
    <property type="entry name" value="cyt_tran_rel"/>
    <property type="match status" value="1"/>
</dbReference>
<dbReference type="NCBIfam" id="TIGR00018">
    <property type="entry name" value="panC"/>
    <property type="match status" value="1"/>
</dbReference>
<dbReference type="PANTHER" id="PTHR21299">
    <property type="entry name" value="CYTIDYLATE KINASE/PANTOATE-BETA-ALANINE LIGASE"/>
    <property type="match status" value="1"/>
</dbReference>
<dbReference type="PANTHER" id="PTHR21299:SF1">
    <property type="entry name" value="PANTOATE--BETA-ALANINE LIGASE"/>
    <property type="match status" value="1"/>
</dbReference>
<dbReference type="Pfam" id="PF02569">
    <property type="entry name" value="Pantoate_ligase"/>
    <property type="match status" value="1"/>
</dbReference>
<dbReference type="SUPFAM" id="SSF52374">
    <property type="entry name" value="Nucleotidylyl transferase"/>
    <property type="match status" value="1"/>
</dbReference>
<comment type="function">
    <text evidence="1">Catalyzes the condensation of pantoate with beta-alanine in an ATP-dependent reaction via a pantoyl-adenylate intermediate.</text>
</comment>
<comment type="catalytic activity">
    <reaction evidence="1">
        <text>(R)-pantoate + beta-alanine + ATP = (R)-pantothenate + AMP + diphosphate + H(+)</text>
        <dbReference type="Rhea" id="RHEA:10912"/>
        <dbReference type="ChEBI" id="CHEBI:15378"/>
        <dbReference type="ChEBI" id="CHEBI:15980"/>
        <dbReference type="ChEBI" id="CHEBI:29032"/>
        <dbReference type="ChEBI" id="CHEBI:30616"/>
        <dbReference type="ChEBI" id="CHEBI:33019"/>
        <dbReference type="ChEBI" id="CHEBI:57966"/>
        <dbReference type="ChEBI" id="CHEBI:456215"/>
        <dbReference type="EC" id="6.3.2.1"/>
    </reaction>
</comment>
<comment type="pathway">
    <text evidence="1">Cofactor biosynthesis; (R)-pantothenate biosynthesis; (R)-pantothenate from (R)-pantoate and beta-alanine: step 1/1.</text>
</comment>
<comment type="subunit">
    <text evidence="1">Homodimer.</text>
</comment>
<comment type="subcellular location">
    <subcellularLocation>
        <location evidence="1">Cytoplasm</location>
    </subcellularLocation>
</comment>
<comment type="miscellaneous">
    <text evidence="1">The reaction proceeds by a bi uni uni bi ping pong mechanism.</text>
</comment>
<comment type="similarity">
    <text evidence="1">Belongs to the pantothenate synthetase family.</text>
</comment>
<gene>
    <name evidence="1" type="primary">panC</name>
    <name type="ordered locus">amb4371</name>
</gene>
<proteinExistence type="inferred from homology"/>
<sequence length="284" mass="30164">MSTAVHIVRSVAALRAQVGAWRDEGLSVALVPTMGALHAGHLSLVKRGLELADRAVASVFVNPTQFGPNEDFARYPRQEELDAAALSSAGCHLLFAPDVAEMYPEGFATTVSVSGVSDGLCGAVRPGHFAGVATVVTKLLLQCLPDVALFGEKDYQQLAVIRRFARDLDIPVRIEGVPTLREDDGLAMSSRNAYMTPEQRAIAPWLIRALTGIADGLRAGAKAADLCPMAVSGLLKAGFDSVDYIEVRDAASLAPAEILDRPLRILAAARLGKTRLIDNIGVEP</sequence>
<protein>
    <recommendedName>
        <fullName evidence="1">Pantothenate synthetase</fullName>
        <shortName evidence="1">PS</shortName>
        <ecNumber evidence="1">6.3.2.1</ecNumber>
    </recommendedName>
    <alternativeName>
        <fullName evidence="1">Pantoate--beta-alanine ligase</fullName>
    </alternativeName>
    <alternativeName>
        <fullName evidence="1">Pantoate-activating enzyme</fullName>
    </alternativeName>
</protein>
<organism>
    <name type="scientific">Paramagnetospirillum magneticum (strain ATCC 700264 / AMB-1)</name>
    <name type="common">Magnetospirillum magneticum</name>
    <dbReference type="NCBI Taxonomy" id="342108"/>
    <lineage>
        <taxon>Bacteria</taxon>
        <taxon>Pseudomonadati</taxon>
        <taxon>Pseudomonadota</taxon>
        <taxon>Alphaproteobacteria</taxon>
        <taxon>Rhodospirillales</taxon>
        <taxon>Magnetospirillaceae</taxon>
        <taxon>Paramagnetospirillum</taxon>
    </lineage>
</organism>
<reference key="1">
    <citation type="journal article" date="2005" name="DNA Res.">
        <title>Complete genome sequence of the facultative anaerobic magnetotactic bacterium Magnetospirillum sp. strain AMB-1.</title>
        <authorList>
            <person name="Matsunaga T."/>
            <person name="Okamura Y."/>
            <person name="Fukuda Y."/>
            <person name="Wahyudi A.T."/>
            <person name="Murase Y."/>
            <person name="Takeyama H."/>
        </authorList>
    </citation>
    <scope>NUCLEOTIDE SEQUENCE [LARGE SCALE GENOMIC DNA]</scope>
    <source>
        <strain>ATCC 700264 / AMB-1</strain>
    </source>
</reference>
<name>PANC_PARM1</name>
<evidence type="ECO:0000255" key="1">
    <source>
        <dbReference type="HAMAP-Rule" id="MF_00158"/>
    </source>
</evidence>
<accession>Q2VZ00</accession>
<feature type="chain" id="PRO_0000305478" description="Pantothenate synthetase">
    <location>
        <begin position="1"/>
        <end position="284"/>
    </location>
</feature>
<feature type="active site" description="Proton donor" evidence="1">
    <location>
        <position position="41"/>
    </location>
</feature>
<feature type="binding site" evidence="1">
    <location>
        <begin position="34"/>
        <end position="41"/>
    </location>
    <ligand>
        <name>ATP</name>
        <dbReference type="ChEBI" id="CHEBI:30616"/>
    </ligand>
</feature>
<feature type="binding site" evidence="1">
    <location>
        <position position="65"/>
    </location>
    <ligand>
        <name>(R)-pantoate</name>
        <dbReference type="ChEBI" id="CHEBI:15980"/>
    </ligand>
</feature>
<feature type="binding site" evidence="1">
    <location>
        <position position="65"/>
    </location>
    <ligand>
        <name>beta-alanine</name>
        <dbReference type="ChEBI" id="CHEBI:57966"/>
    </ligand>
</feature>
<feature type="binding site" evidence="1">
    <location>
        <begin position="151"/>
        <end position="154"/>
    </location>
    <ligand>
        <name>ATP</name>
        <dbReference type="ChEBI" id="CHEBI:30616"/>
    </ligand>
</feature>
<feature type="binding site" evidence="1">
    <location>
        <position position="157"/>
    </location>
    <ligand>
        <name>(R)-pantoate</name>
        <dbReference type="ChEBI" id="CHEBI:15980"/>
    </ligand>
</feature>
<feature type="binding site" evidence="1">
    <location>
        <position position="180"/>
    </location>
    <ligand>
        <name>ATP</name>
        <dbReference type="ChEBI" id="CHEBI:30616"/>
    </ligand>
</feature>
<feature type="binding site" evidence="1">
    <location>
        <begin position="188"/>
        <end position="191"/>
    </location>
    <ligand>
        <name>ATP</name>
        <dbReference type="ChEBI" id="CHEBI:30616"/>
    </ligand>
</feature>
<keyword id="KW-0067">ATP-binding</keyword>
<keyword id="KW-0963">Cytoplasm</keyword>
<keyword id="KW-0436">Ligase</keyword>
<keyword id="KW-0547">Nucleotide-binding</keyword>
<keyword id="KW-0566">Pantothenate biosynthesis</keyword>